<keyword id="KW-1015">Disulfide bond</keyword>
<keyword id="KW-0574">Periplasm</keyword>
<keyword id="KW-0732">Signal</keyword>
<keyword id="KW-0813">Transport</keyword>
<evidence type="ECO:0000255" key="1">
    <source>
        <dbReference type="HAMAP-Rule" id="MF_01000"/>
    </source>
</evidence>
<reference key="1">
    <citation type="submission" date="2002-12" db="EMBL/GenBank/DDBJ databases">
        <title>Complete genome sequence of Vibrio vulnificus CMCP6.</title>
        <authorList>
            <person name="Rhee J.H."/>
            <person name="Kim S.Y."/>
            <person name="Chung S.S."/>
            <person name="Kim J.J."/>
            <person name="Moon Y.H."/>
            <person name="Jeong H."/>
            <person name="Choy H.E."/>
        </authorList>
    </citation>
    <scope>NUCLEOTIDE SEQUENCE [LARGE SCALE GENOMIC DNA]</scope>
    <source>
        <strain>CMCP6</strain>
    </source>
</reference>
<gene>
    <name evidence="1" type="primary">btuF</name>
    <name type="ordered locus">VV1_0560</name>
</gene>
<sequence length="273" mass="30881">MMKTLSSLLLLFSVSLQAAPIERVISLAPHATEIAYAAGLGDKLIAVSEMSDYPEAAKKLEKVSNYKGINLEKIITLKPDLIIAWPAGNPAKELEKLEQFGFKIYYSQTKSLKDIGDNIEQLSQYSDDPQIGLNNARDYRTHLEALRAKYQNLPKTRYFYQLSDTPIITVAGQNWPTEVFRFCGGENVFDGASAPYPQVSIEQVILKRPQAMFVSPHAIQNNGMWSPWVEEIPALKNAHFWQLDADWLNRPTPRTLLAIEQVCEHFASIEQKR</sequence>
<dbReference type="EMBL" id="AE016795">
    <property type="protein sequence ID" value="AAO09077.1"/>
    <property type="molecule type" value="Genomic_DNA"/>
</dbReference>
<dbReference type="RefSeq" id="WP_011078647.1">
    <property type="nucleotide sequence ID" value="NC_004459.3"/>
</dbReference>
<dbReference type="SMR" id="Q8DEM7"/>
<dbReference type="KEGG" id="vvu:VV1_0560"/>
<dbReference type="HOGENOM" id="CLU_038034_2_5_6"/>
<dbReference type="Proteomes" id="UP000002275">
    <property type="component" value="Chromosome 1"/>
</dbReference>
<dbReference type="GO" id="GO:0042597">
    <property type="term" value="C:periplasmic space"/>
    <property type="evidence" value="ECO:0007669"/>
    <property type="project" value="UniProtKB-SubCell"/>
</dbReference>
<dbReference type="GO" id="GO:0031419">
    <property type="term" value="F:cobalamin binding"/>
    <property type="evidence" value="ECO:0007669"/>
    <property type="project" value="InterPro"/>
</dbReference>
<dbReference type="GO" id="GO:0015889">
    <property type="term" value="P:cobalamin transport"/>
    <property type="evidence" value="ECO:0007669"/>
    <property type="project" value="UniProtKB-UniRule"/>
</dbReference>
<dbReference type="CDD" id="cd01144">
    <property type="entry name" value="BtuF"/>
    <property type="match status" value="1"/>
</dbReference>
<dbReference type="Gene3D" id="3.40.50.1980">
    <property type="entry name" value="Nitrogenase molybdenum iron protein domain"/>
    <property type="match status" value="2"/>
</dbReference>
<dbReference type="HAMAP" id="MF_01000">
    <property type="entry name" value="BtuF"/>
    <property type="match status" value="1"/>
</dbReference>
<dbReference type="InterPro" id="IPR050902">
    <property type="entry name" value="ABC_Transporter_SBP"/>
</dbReference>
<dbReference type="InterPro" id="IPR002491">
    <property type="entry name" value="ABC_transptr_periplasmic_BD"/>
</dbReference>
<dbReference type="InterPro" id="IPR023544">
    <property type="entry name" value="ABC_transptr_vit_B12-bd"/>
</dbReference>
<dbReference type="InterPro" id="IPR054828">
    <property type="entry name" value="Vit_B12_bind_prot"/>
</dbReference>
<dbReference type="NCBIfam" id="NF002894">
    <property type="entry name" value="PRK03379.1"/>
    <property type="match status" value="1"/>
</dbReference>
<dbReference type="NCBIfam" id="NF038402">
    <property type="entry name" value="TroA_like"/>
    <property type="match status" value="1"/>
</dbReference>
<dbReference type="PANTHER" id="PTHR30535:SF34">
    <property type="entry name" value="MOLYBDATE-BINDING PROTEIN MOLA"/>
    <property type="match status" value="1"/>
</dbReference>
<dbReference type="PANTHER" id="PTHR30535">
    <property type="entry name" value="VITAMIN B12-BINDING PROTEIN"/>
    <property type="match status" value="1"/>
</dbReference>
<dbReference type="Pfam" id="PF01497">
    <property type="entry name" value="Peripla_BP_2"/>
    <property type="match status" value="1"/>
</dbReference>
<dbReference type="SUPFAM" id="SSF53807">
    <property type="entry name" value="Helical backbone' metal receptor"/>
    <property type="match status" value="1"/>
</dbReference>
<dbReference type="PROSITE" id="PS50983">
    <property type="entry name" value="FE_B12_PBP"/>
    <property type="match status" value="1"/>
</dbReference>
<proteinExistence type="inferred from homology"/>
<protein>
    <recommendedName>
        <fullName evidence="1">Vitamin B12-binding protein</fullName>
    </recommendedName>
</protein>
<comment type="function">
    <text evidence="1">Part of the ABC transporter complex BtuCDF involved in vitamin B12 import. Binds vitamin B12 and delivers it to the periplasmic surface of BtuC.</text>
</comment>
<comment type="subunit">
    <text evidence="1">The complex is composed of two ATP-binding proteins (BtuD), two transmembrane proteins (BtuC) and a solute-binding protein (BtuF).</text>
</comment>
<comment type="subcellular location">
    <subcellularLocation>
        <location evidence="1">Periplasm</location>
    </subcellularLocation>
</comment>
<comment type="similarity">
    <text evidence="1">Belongs to the BtuF family.</text>
</comment>
<organism>
    <name type="scientific">Vibrio vulnificus (strain CMCP6)</name>
    <dbReference type="NCBI Taxonomy" id="216895"/>
    <lineage>
        <taxon>Bacteria</taxon>
        <taxon>Pseudomonadati</taxon>
        <taxon>Pseudomonadota</taxon>
        <taxon>Gammaproteobacteria</taxon>
        <taxon>Vibrionales</taxon>
        <taxon>Vibrionaceae</taxon>
        <taxon>Vibrio</taxon>
    </lineage>
</organism>
<accession>Q8DEM7</accession>
<feature type="signal peptide" evidence="1">
    <location>
        <begin position="1"/>
        <end position="18"/>
    </location>
</feature>
<feature type="chain" id="PRO_0000003510" description="Vitamin B12-binding protein">
    <location>
        <begin position="19"/>
        <end position="273"/>
    </location>
</feature>
<feature type="domain" description="Fe/B12 periplasmic-binding" evidence="1">
    <location>
        <begin position="23"/>
        <end position="273"/>
    </location>
</feature>
<feature type="site" description="Important for BtuC binding" evidence="1">
    <location>
        <position position="72"/>
    </location>
</feature>
<feature type="site" description="Important for BtuC binding" evidence="1">
    <location>
        <position position="202"/>
    </location>
</feature>
<feature type="disulfide bond" evidence="1">
    <location>
        <begin position="183"/>
        <end position="263"/>
    </location>
</feature>
<name>BTUF_VIBVU</name>